<protein>
    <recommendedName>
        <fullName evidence="1">K(+)/H(+) antiporter NhaP2</fullName>
    </recommendedName>
    <alternativeName>
        <fullName evidence="1">Potassium/proton antiporter NhaP2</fullName>
    </alternativeName>
</protein>
<proteinExistence type="inferred from homology"/>
<reference key="1">
    <citation type="journal article" date="2009" name="PLoS Genet.">
        <title>Organised genome dynamics in the Escherichia coli species results in highly diverse adaptive paths.</title>
        <authorList>
            <person name="Touchon M."/>
            <person name="Hoede C."/>
            <person name="Tenaillon O."/>
            <person name="Barbe V."/>
            <person name="Baeriswyl S."/>
            <person name="Bidet P."/>
            <person name="Bingen E."/>
            <person name="Bonacorsi S."/>
            <person name="Bouchier C."/>
            <person name="Bouvet O."/>
            <person name="Calteau A."/>
            <person name="Chiapello H."/>
            <person name="Clermont O."/>
            <person name="Cruveiller S."/>
            <person name="Danchin A."/>
            <person name="Diard M."/>
            <person name="Dossat C."/>
            <person name="Karoui M.E."/>
            <person name="Frapy E."/>
            <person name="Garry L."/>
            <person name="Ghigo J.M."/>
            <person name="Gilles A.M."/>
            <person name="Johnson J."/>
            <person name="Le Bouguenec C."/>
            <person name="Lescat M."/>
            <person name="Mangenot S."/>
            <person name="Martinez-Jehanne V."/>
            <person name="Matic I."/>
            <person name="Nassif X."/>
            <person name="Oztas S."/>
            <person name="Petit M.A."/>
            <person name="Pichon C."/>
            <person name="Rouy Z."/>
            <person name="Ruf C.S."/>
            <person name="Schneider D."/>
            <person name="Tourret J."/>
            <person name="Vacherie B."/>
            <person name="Vallenet D."/>
            <person name="Medigue C."/>
            <person name="Rocha E.P.C."/>
            <person name="Denamur E."/>
        </authorList>
    </citation>
    <scope>NUCLEOTIDE SEQUENCE [LARGE SCALE GENOMIC DNA]</scope>
    <source>
        <strain>S88 / ExPEC</strain>
    </source>
</reference>
<sequence>MDATTIISLFILGSILVTSSILLSSFSSRLGIPILVIFLAIGMLAGVDGVGGIPFDNYPFAYMVSNLALAIILLDGGMRTQASSFRVALGPALSLATLGVLITSGLTGMMAAWLFNLDLIEGLLIGAIVGSTDAAAVFSLLGGKGLNERVGSTLEIESGSNDPMAVFLTITLIAMIQQHESSVSWMFVVDILQQFGLGIVIGLGGGYLLLQMINRIALPAGLYPLLALSGGILIFALTTALEGSGILAVYLCGFLLGNRPIRNRYGILQNFDGLAWLAQIAMFLVLGLLVNPSDLLPIAIPALILSAWMIFFARPLSVFAGLLPFRGFNLRERVFISWVGLRGAVPIILAVFPMMAGLENARLFFNVAFFVVLVSLLLQGTSLSWAAKKAKVVVPPVGRPVSRVGLDIHPENPWEQFVYQLSADKWCVGAALRDLHMPKETRIAALFRDNQLLHPTGSTRLREGDVLCVIGRERDLPALGKLFSQSPPVALDQRFFGDFILEASAKYADVALIYGLEDGREYRDKQQTLGEIVQQLLGAAPVVGDQVEFAGMIWTVAEKEDNEVLKIGVRVAEEEAES</sequence>
<feature type="chain" id="PRO_1000136699" description="K(+)/H(+) antiporter NhaP2">
    <location>
        <begin position="1"/>
        <end position="578"/>
    </location>
</feature>
<feature type="transmembrane region" description="Helical" evidence="1">
    <location>
        <begin position="6"/>
        <end position="26"/>
    </location>
</feature>
<feature type="transmembrane region" description="Helical" evidence="1">
    <location>
        <begin position="30"/>
        <end position="50"/>
    </location>
</feature>
<feature type="transmembrane region" description="Helical" evidence="1">
    <location>
        <begin position="58"/>
        <end position="78"/>
    </location>
</feature>
<feature type="transmembrane region" description="Helical" evidence="1">
    <location>
        <begin position="87"/>
        <end position="107"/>
    </location>
</feature>
<feature type="transmembrane region" description="Helical" evidence="1">
    <location>
        <begin position="109"/>
        <end position="129"/>
    </location>
</feature>
<feature type="transmembrane region" description="Helical" evidence="1">
    <location>
        <begin position="156"/>
        <end position="176"/>
    </location>
</feature>
<feature type="transmembrane region" description="Helical" evidence="1">
    <location>
        <begin position="185"/>
        <end position="205"/>
    </location>
</feature>
<feature type="transmembrane region" description="Helical" evidence="1">
    <location>
        <begin position="216"/>
        <end position="236"/>
    </location>
</feature>
<feature type="transmembrane region" description="Helical" evidence="1">
    <location>
        <begin position="237"/>
        <end position="257"/>
    </location>
</feature>
<feature type="transmembrane region" description="Helical" evidence="1">
    <location>
        <begin position="270"/>
        <end position="290"/>
    </location>
</feature>
<feature type="transmembrane region" description="Helical" evidence="1">
    <location>
        <begin position="293"/>
        <end position="313"/>
    </location>
</feature>
<feature type="transmembrane region" description="Helical" evidence="1">
    <location>
        <begin position="334"/>
        <end position="354"/>
    </location>
</feature>
<feature type="transmembrane region" description="Helical" evidence="1">
    <location>
        <begin position="363"/>
        <end position="383"/>
    </location>
</feature>
<feature type="domain" description="RCK C-terminal" evidence="1">
    <location>
        <begin position="403"/>
        <end position="485"/>
    </location>
</feature>
<dbReference type="EMBL" id="CU928161">
    <property type="protein sequence ID" value="CAR02580.1"/>
    <property type="molecule type" value="Genomic_DNA"/>
</dbReference>
<dbReference type="RefSeq" id="WP_000340206.1">
    <property type="nucleotide sequence ID" value="NC_011742.1"/>
</dbReference>
<dbReference type="SMR" id="B7MK88"/>
<dbReference type="KEGG" id="ecz:ECS88_1254"/>
<dbReference type="HOGENOM" id="CLU_005912_9_2_6"/>
<dbReference type="Proteomes" id="UP000000747">
    <property type="component" value="Chromosome"/>
</dbReference>
<dbReference type="GO" id="GO:0005886">
    <property type="term" value="C:plasma membrane"/>
    <property type="evidence" value="ECO:0007669"/>
    <property type="project" value="UniProtKB-SubCell"/>
</dbReference>
<dbReference type="GO" id="GO:0050660">
    <property type="term" value="F:flavin adenine dinucleotide binding"/>
    <property type="evidence" value="ECO:0007669"/>
    <property type="project" value="InterPro"/>
</dbReference>
<dbReference type="GO" id="GO:0015386">
    <property type="term" value="F:potassium:proton antiporter activity"/>
    <property type="evidence" value="ECO:0007669"/>
    <property type="project" value="UniProtKB-UniRule"/>
</dbReference>
<dbReference type="GO" id="GO:0006884">
    <property type="term" value="P:cell volume homeostasis"/>
    <property type="evidence" value="ECO:0007669"/>
    <property type="project" value="InterPro"/>
</dbReference>
<dbReference type="FunFam" id="1.20.1530.20:FF:000002">
    <property type="entry name" value="K(+)/H(+) antiporter NhaP2"/>
    <property type="match status" value="1"/>
</dbReference>
<dbReference type="FunFam" id="3.30.465.10:FF:000009">
    <property type="entry name" value="K(+)/H(+) antiporter NhaP2"/>
    <property type="match status" value="1"/>
</dbReference>
<dbReference type="FunFam" id="3.30.70.1450:FF:000007">
    <property type="entry name" value="K(+)/H(+) antiporter NhaP2"/>
    <property type="match status" value="1"/>
</dbReference>
<dbReference type="Gene3D" id="1.20.1530.20">
    <property type="match status" value="1"/>
</dbReference>
<dbReference type="Gene3D" id="3.30.465.10">
    <property type="match status" value="1"/>
</dbReference>
<dbReference type="Gene3D" id="3.30.70.1450">
    <property type="entry name" value="Regulator of K+ conductance, C-terminal domain"/>
    <property type="match status" value="1"/>
</dbReference>
<dbReference type="HAMAP" id="MF_01075">
    <property type="entry name" value="NhaP2"/>
    <property type="match status" value="1"/>
</dbReference>
<dbReference type="InterPro" id="IPR006153">
    <property type="entry name" value="Cation/H_exchanger_TM"/>
</dbReference>
<dbReference type="InterPro" id="IPR036318">
    <property type="entry name" value="FAD-bd_PCMH-like_sf"/>
</dbReference>
<dbReference type="InterPro" id="IPR016169">
    <property type="entry name" value="FAD-bd_PCMH_sub2"/>
</dbReference>
<dbReference type="InterPro" id="IPR038770">
    <property type="entry name" value="Na+/solute_symporter_sf"/>
</dbReference>
<dbReference type="InterPro" id="IPR023729">
    <property type="entry name" value="NhaP2"/>
</dbReference>
<dbReference type="InterPro" id="IPR006037">
    <property type="entry name" value="RCK_C"/>
</dbReference>
<dbReference type="InterPro" id="IPR036721">
    <property type="entry name" value="RCK_C_sf"/>
</dbReference>
<dbReference type="InterPro" id="IPR005170">
    <property type="entry name" value="Transptr-assoc_dom"/>
</dbReference>
<dbReference type="NCBIfam" id="NF003714">
    <property type="entry name" value="PRK05326.1-1"/>
    <property type="match status" value="1"/>
</dbReference>
<dbReference type="NCBIfam" id="NF003715">
    <property type="entry name" value="PRK05326.1-2"/>
    <property type="match status" value="1"/>
</dbReference>
<dbReference type="NCBIfam" id="NF003716">
    <property type="entry name" value="PRK05326.1-3"/>
    <property type="match status" value="1"/>
</dbReference>
<dbReference type="PANTHER" id="PTHR32507:SF7">
    <property type="entry name" value="K(+)_H(+) ANTIPORTER NHAP2"/>
    <property type="match status" value="1"/>
</dbReference>
<dbReference type="PANTHER" id="PTHR32507">
    <property type="entry name" value="NA(+)/H(+) ANTIPORTER 1"/>
    <property type="match status" value="1"/>
</dbReference>
<dbReference type="Pfam" id="PF03471">
    <property type="entry name" value="CorC_HlyC"/>
    <property type="match status" value="1"/>
</dbReference>
<dbReference type="Pfam" id="PF00999">
    <property type="entry name" value="Na_H_Exchanger"/>
    <property type="match status" value="1"/>
</dbReference>
<dbReference type="Pfam" id="PF02080">
    <property type="entry name" value="TrkA_C"/>
    <property type="match status" value="1"/>
</dbReference>
<dbReference type="SMART" id="SM01091">
    <property type="entry name" value="CorC_HlyC"/>
    <property type="match status" value="1"/>
</dbReference>
<dbReference type="SUPFAM" id="SSF56176">
    <property type="entry name" value="FAD-binding/transporter-associated domain-like"/>
    <property type="match status" value="1"/>
</dbReference>
<dbReference type="SUPFAM" id="SSF116726">
    <property type="entry name" value="TrkA C-terminal domain-like"/>
    <property type="match status" value="1"/>
</dbReference>
<dbReference type="PROSITE" id="PS51202">
    <property type="entry name" value="RCK_C"/>
    <property type="match status" value="1"/>
</dbReference>
<gene>
    <name evidence="1" type="primary">nhaP2</name>
    <name type="synonym">cvrA</name>
    <name type="ordered locus">ECS88_1254</name>
</gene>
<comment type="function">
    <text evidence="1">K(+)/H(+) antiporter that extrudes potassium in exchange for external protons and maintains the internal concentration of potassium under toxic levels.</text>
</comment>
<comment type="catalytic activity">
    <reaction evidence="1">
        <text>K(+)(in) + H(+)(out) = K(+)(out) + H(+)(in)</text>
        <dbReference type="Rhea" id="RHEA:29467"/>
        <dbReference type="ChEBI" id="CHEBI:15378"/>
        <dbReference type="ChEBI" id="CHEBI:29103"/>
    </reaction>
    <physiologicalReaction direction="left-to-right" evidence="1">
        <dbReference type="Rhea" id="RHEA:29468"/>
    </physiologicalReaction>
</comment>
<comment type="subcellular location">
    <subcellularLocation>
        <location evidence="1">Cell inner membrane</location>
        <topology evidence="1">Multi-pass membrane protein</topology>
    </subcellularLocation>
</comment>
<comment type="similarity">
    <text evidence="1">Belongs to the monovalent cation:proton antiporter 1 (CPA1) transporter (TC 2.A.36) family. NhaP2 subfamily.</text>
</comment>
<evidence type="ECO:0000255" key="1">
    <source>
        <dbReference type="HAMAP-Rule" id="MF_01075"/>
    </source>
</evidence>
<name>NHAP2_ECO45</name>
<keyword id="KW-0050">Antiport</keyword>
<keyword id="KW-0997">Cell inner membrane</keyword>
<keyword id="KW-1003">Cell membrane</keyword>
<keyword id="KW-0406">Ion transport</keyword>
<keyword id="KW-0472">Membrane</keyword>
<keyword id="KW-0630">Potassium</keyword>
<keyword id="KW-0633">Potassium transport</keyword>
<keyword id="KW-1185">Reference proteome</keyword>
<keyword id="KW-0812">Transmembrane</keyword>
<keyword id="KW-1133">Transmembrane helix</keyword>
<keyword id="KW-0813">Transport</keyword>
<organism>
    <name type="scientific">Escherichia coli O45:K1 (strain S88 / ExPEC)</name>
    <dbReference type="NCBI Taxonomy" id="585035"/>
    <lineage>
        <taxon>Bacteria</taxon>
        <taxon>Pseudomonadati</taxon>
        <taxon>Pseudomonadota</taxon>
        <taxon>Gammaproteobacteria</taxon>
        <taxon>Enterobacterales</taxon>
        <taxon>Enterobacteriaceae</taxon>
        <taxon>Escherichia</taxon>
    </lineage>
</organism>
<accession>B7MK88</accession>